<reference key="1">
    <citation type="journal article" date="2006" name="J. Bacteriol.">
        <title>Pathogenomic sequence analysis of Bacillus cereus and Bacillus thuringiensis isolates closely related to Bacillus anthracis.</title>
        <authorList>
            <person name="Han C.S."/>
            <person name="Xie G."/>
            <person name="Challacombe J.F."/>
            <person name="Altherr M.R."/>
            <person name="Bhotika S.S."/>
            <person name="Bruce D."/>
            <person name="Campbell C.S."/>
            <person name="Campbell M.L."/>
            <person name="Chen J."/>
            <person name="Chertkov O."/>
            <person name="Cleland C."/>
            <person name="Dimitrijevic M."/>
            <person name="Doggett N.A."/>
            <person name="Fawcett J.J."/>
            <person name="Glavina T."/>
            <person name="Goodwin L.A."/>
            <person name="Hill K.K."/>
            <person name="Hitchcock P."/>
            <person name="Jackson P.J."/>
            <person name="Keim P."/>
            <person name="Kewalramani A.R."/>
            <person name="Longmire J."/>
            <person name="Lucas S."/>
            <person name="Malfatti S."/>
            <person name="McMurry K."/>
            <person name="Meincke L.J."/>
            <person name="Misra M."/>
            <person name="Moseman B.L."/>
            <person name="Mundt M."/>
            <person name="Munk A.C."/>
            <person name="Okinaka R.T."/>
            <person name="Parson-Quintana B."/>
            <person name="Reilly L.P."/>
            <person name="Richardson P."/>
            <person name="Robinson D.L."/>
            <person name="Rubin E."/>
            <person name="Saunders E."/>
            <person name="Tapia R."/>
            <person name="Tesmer J.G."/>
            <person name="Thayer N."/>
            <person name="Thompson L.S."/>
            <person name="Tice H."/>
            <person name="Ticknor L.O."/>
            <person name="Wills P.L."/>
            <person name="Brettin T.S."/>
            <person name="Gilna P."/>
        </authorList>
    </citation>
    <scope>NUCLEOTIDE SEQUENCE [LARGE SCALE GENOMIC DNA]</scope>
    <source>
        <strain>97-27</strain>
    </source>
</reference>
<protein>
    <recommendedName>
        <fullName evidence="1">ATP-dependent protease ATPase subunit HslU</fullName>
    </recommendedName>
    <alternativeName>
        <fullName evidence="1">Unfoldase HslU</fullName>
    </alternativeName>
</protein>
<dbReference type="EMBL" id="AE017355">
    <property type="protein sequence ID" value="AAT60603.1"/>
    <property type="molecule type" value="Genomic_DNA"/>
</dbReference>
<dbReference type="RefSeq" id="WP_000550088.1">
    <property type="nucleotide sequence ID" value="NC_005957.1"/>
</dbReference>
<dbReference type="RefSeq" id="YP_037890.1">
    <property type="nucleotide sequence ID" value="NC_005957.1"/>
</dbReference>
<dbReference type="SMR" id="Q6HEY6"/>
<dbReference type="GeneID" id="45023657"/>
<dbReference type="KEGG" id="btk:BT9727_3570"/>
<dbReference type="PATRIC" id="fig|281309.8.peg.3808"/>
<dbReference type="HOGENOM" id="CLU_033123_0_0_9"/>
<dbReference type="Proteomes" id="UP000001301">
    <property type="component" value="Chromosome"/>
</dbReference>
<dbReference type="GO" id="GO:0009376">
    <property type="term" value="C:HslUV protease complex"/>
    <property type="evidence" value="ECO:0007669"/>
    <property type="project" value="UniProtKB-UniRule"/>
</dbReference>
<dbReference type="GO" id="GO:0005524">
    <property type="term" value="F:ATP binding"/>
    <property type="evidence" value="ECO:0007669"/>
    <property type="project" value="UniProtKB-UniRule"/>
</dbReference>
<dbReference type="GO" id="GO:0016887">
    <property type="term" value="F:ATP hydrolysis activity"/>
    <property type="evidence" value="ECO:0007669"/>
    <property type="project" value="InterPro"/>
</dbReference>
<dbReference type="GO" id="GO:0008233">
    <property type="term" value="F:peptidase activity"/>
    <property type="evidence" value="ECO:0007669"/>
    <property type="project" value="InterPro"/>
</dbReference>
<dbReference type="GO" id="GO:0036402">
    <property type="term" value="F:proteasome-activating activity"/>
    <property type="evidence" value="ECO:0007669"/>
    <property type="project" value="UniProtKB-UniRule"/>
</dbReference>
<dbReference type="GO" id="GO:0043335">
    <property type="term" value="P:protein unfolding"/>
    <property type="evidence" value="ECO:0007669"/>
    <property type="project" value="UniProtKB-UniRule"/>
</dbReference>
<dbReference type="GO" id="GO:0051603">
    <property type="term" value="P:proteolysis involved in protein catabolic process"/>
    <property type="evidence" value="ECO:0007669"/>
    <property type="project" value="TreeGrafter"/>
</dbReference>
<dbReference type="CDD" id="cd19498">
    <property type="entry name" value="RecA-like_HslU"/>
    <property type="match status" value="1"/>
</dbReference>
<dbReference type="FunFam" id="3.40.50.300:FF:000220">
    <property type="entry name" value="ATP-dependent protease ATPase subunit HslU"/>
    <property type="match status" value="1"/>
</dbReference>
<dbReference type="Gene3D" id="1.10.8.60">
    <property type="match status" value="1"/>
</dbReference>
<dbReference type="Gene3D" id="1.10.8.10">
    <property type="entry name" value="DNA helicase RuvA subunit, C-terminal domain"/>
    <property type="match status" value="2"/>
</dbReference>
<dbReference type="Gene3D" id="3.40.50.300">
    <property type="entry name" value="P-loop containing nucleotide triphosphate hydrolases"/>
    <property type="match status" value="1"/>
</dbReference>
<dbReference type="HAMAP" id="MF_00249">
    <property type="entry name" value="HslU"/>
    <property type="match status" value="1"/>
</dbReference>
<dbReference type="InterPro" id="IPR003593">
    <property type="entry name" value="AAA+_ATPase"/>
</dbReference>
<dbReference type="InterPro" id="IPR050052">
    <property type="entry name" value="ATP-dep_Clp_protease_ClpX"/>
</dbReference>
<dbReference type="InterPro" id="IPR003959">
    <property type="entry name" value="ATPase_AAA_core"/>
</dbReference>
<dbReference type="InterPro" id="IPR019489">
    <property type="entry name" value="Clp_ATPase_C"/>
</dbReference>
<dbReference type="InterPro" id="IPR004491">
    <property type="entry name" value="HslU"/>
</dbReference>
<dbReference type="InterPro" id="IPR027417">
    <property type="entry name" value="P-loop_NTPase"/>
</dbReference>
<dbReference type="NCBIfam" id="TIGR00390">
    <property type="entry name" value="hslU"/>
    <property type="match status" value="1"/>
</dbReference>
<dbReference type="NCBIfam" id="NF003544">
    <property type="entry name" value="PRK05201.1"/>
    <property type="match status" value="1"/>
</dbReference>
<dbReference type="PANTHER" id="PTHR48102">
    <property type="entry name" value="ATP-DEPENDENT CLP PROTEASE ATP-BINDING SUBUNIT CLPX-LIKE, MITOCHONDRIAL-RELATED"/>
    <property type="match status" value="1"/>
</dbReference>
<dbReference type="PANTHER" id="PTHR48102:SF3">
    <property type="entry name" value="ATP-DEPENDENT PROTEASE ATPASE SUBUNIT HSLU"/>
    <property type="match status" value="1"/>
</dbReference>
<dbReference type="Pfam" id="PF00004">
    <property type="entry name" value="AAA"/>
    <property type="match status" value="1"/>
</dbReference>
<dbReference type="Pfam" id="PF07724">
    <property type="entry name" value="AAA_2"/>
    <property type="match status" value="1"/>
</dbReference>
<dbReference type="Pfam" id="PF10431">
    <property type="entry name" value="ClpB_D2-small"/>
    <property type="match status" value="1"/>
</dbReference>
<dbReference type="SMART" id="SM00382">
    <property type="entry name" value="AAA"/>
    <property type="match status" value="1"/>
</dbReference>
<dbReference type="SMART" id="SM01086">
    <property type="entry name" value="ClpB_D2-small"/>
    <property type="match status" value="1"/>
</dbReference>
<dbReference type="SUPFAM" id="SSF52540">
    <property type="entry name" value="P-loop containing nucleoside triphosphate hydrolases"/>
    <property type="match status" value="1"/>
</dbReference>
<keyword id="KW-0067">ATP-binding</keyword>
<keyword id="KW-0143">Chaperone</keyword>
<keyword id="KW-0963">Cytoplasm</keyword>
<keyword id="KW-0547">Nucleotide-binding</keyword>
<sequence length="463" mass="52213">MHLHFTPRQIVEKLDQYIIGQKDAKKAVAVALRNRYRRSKLAENLRDEIAPKNILMIGPTGVGKTEVARRMAKLVGAPFIKVEATKFTEVGYVGRDVESMVRDLVETSVRIVKEEMVVKVQDKAEEQANQRLVEILVPSPEKQSGFKNPLEMLFGGTQNSNQTTDSQEDVEIEKKRQDVERKLAAGLLEDEIVSIEVTEQQSSMFDMLQGTGMEQMGMNFQDALGSFMPKKTKKRKLSVKEARKVLTNEEAQRLIDMDEVTQEAVYRAEQLGIIFIDEIDKIAGKQSNSVDVSREGVQRDILPIVEGSNVATKYGSVKTDYILFVAAGAFHMSKPSDLIPELQGRFPIRVELTKLSTDDFVKILIEPDNALIKQYMALLATEGIEIEFSDEAIRKIAEIAYQVNQDTDNIGARRLHTIMEKLLEDLSFEASEITLEKITITPQYVEEKLATIAKNKDVSQFIL</sequence>
<feature type="chain" id="PRO_0000160474" description="ATP-dependent protease ATPase subunit HslU">
    <location>
        <begin position="1"/>
        <end position="463"/>
    </location>
</feature>
<feature type="binding site" evidence="1">
    <location>
        <position position="19"/>
    </location>
    <ligand>
        <name>ATP</name>
        <dbReference type="ChEBI" id="CHEBI:30616"/>
    </ligand>
</feature>
<feature type="binding site" evidence="1">
    <location>
        <begin position="61"/>
        <end position="66"/>
    </location>
    <ligand>
        <name>ATP</name>
        <dbReference type="ChEBI" id="CHEBI:30616"/>
    </ligand>
</feature>
<feature type="binding site" evidence="1">
    <location>
        <position position="277"/>
    </location>
    <ligand>
        <name>ATP</name>
        <dbReference type="ChEBI" id="CHEBI:30616"/>
    </ligand>
</feature>
<feature type="binding site" evidence="1">
    <location>
        <position position="341"/>
    </location>
    <ligand>
        <name>ATP</name>
        <dbReference type="ChEBI" id="CHEBI:30616"/>
    </ligand>
</feature>
<feature type="binding site" evidence="1">
    <location>
        <position position="413"/>
    </location>
    <ligand>
        <name>ATP</name>
        <dbReference type="ChEBI" id="CHEBI:30616"/>
    </ligand>
</feature>
<evidence type="ECO:0000255" key="1">
    <source>
        <dbReference type="HAMAP-Rule" id="MF_00249"/>
    </source>
</evidence>
<comment type="function">
    <text evidence="1">ATPase subunit of a proteasome-like degradation complex; this subunit has chaperone activity. The binding of ATP and its subsequent hydrolysis by HslU are essential for unfolding of protein substrates subsequently hydrolyzed by HslV. HslU recognizes the N-terminal part of its protein substrates and unfolds these before they are guided to HslV for hydrolysis.</text>
</comment>
<comment type="subunit">
    <text evidence="1">A double ring-shaped homohexamer of HslV is capped on each side by a ring-shaped HslU homohexamer. The assembly of the HslU/HslV complex is dependent on binding of ATP.</text>
</comment>
<comment type="subcellular location">
    <subcellularLocation>
        <location evidence="1">Cytoplasm</location>
    </subcellularLocation>
</comment>
<comment type="similarity">
    <text evidence="1">Belongs to the ClpX chaperone family. HslU subfamily.</text>
</comment>
<organism>
    <name type="scientific">Bacillus thuringiensis subsp. konkukian (strain 97-27)</name>
    <dbReference type="NCBI Taxonomy" id="281309"/>
    <lineage>
        <taxon>Bacteria</taxon>
        <taxon>Bacillati</taxon>
        <taxon>Bacillota</taxon>
        <taxon>Bacilli</taxon>
        <taxon>Bacillales</taxon>
        <taxon>Bacillaceae</taxon>
        <taxon>Bacillus</taxon>
        <taxon>Bacillus cereus group</taxon>
    </lineage>
</organism>
<gene>
    <name evidence="1" type="primary">hslU</name>
    <name type="ordered locus">BT9727_3570</name>
</gene>
<proteinExistence type="inferred from homology"/>
<name>HSLU_BACHK</name>
<accession>Q6HEY6</accession>